<feature type="chain" id="PRO_0000058188" description="pH-response regulator protein palF/RIM8">
    <location>
        <begin position="1"/>
        <end position="782"/>
    </location>
</feature>
<feature type="region of interest" description="Disordered" evidence="2">
    <location>
        <begin position="173"/>
        <end position="194"/>
    </location>
</feature>
<feature type="region of interest" description="Disordered" evidence="2">
    <location>
        <begin position="234"/>
        <end position="300"/>
    </location>
</feature>
<feature type="region of interest" description="Disordered" evidence="2">
    <location>
        <begin position="517"/>
        <end position="586"/>
    </location>
</feature>
<feature type="region of interest" description="Disordered" evidence="2">
    <location>
        <begin position="635"/>
        <end position="654"/>
    </location>
</feature>
<feature type="region of interest" description="Disordered" evidence="2">
    <location>
        <begin position="693"/>
        <end position="782"/>
    </location>
</feature>
<feature type="compositionally biased region" description="Low complexity" evidence="2">
    <location>
        <begin position="181"/>
        <end position="194"/>
    </location>
</feature>
<feature type="compositionally biased region" description="Low complexity" evidence="2">
    <location>
        <begin position="248"/>
        <end position="274"/>
    </location>
</feature>
<feature type="compositionally biased region" description="Polar residues" evidence="2">
    <location>
        <begin position="275"/>
        <end position="297"/>
    </location>
</feature>
<feature type="compositionally biased region" description="Polar residues" evidence="2">
    <location>
        <begin position="517"/>
        <end position="562"/>
    </location>
</feature>
<feature type="compositionally biased region" description="Polar residues" evidence="2">
    <location>
        <begin position="570"/>
        <end position="585"/>
    </location>
</feature>
<feature type="compositionally biased region" description="Low complexity" evidence="2">
    <location>
        <begin position="695"/>
        <end position="704"/>
    </location>
</feature>
<feature type="compositionally biased region" description="Acidic residues" evidence="2">
    <location>
        <begin position="708"/>
        <end position="717"/>
    </location>
</feature>
<feature type="compositionally biased region" description="Low complexity" evidence="2">
    <location>
        <begin position="720"/>
        <end position="729"/>
    </location>
</feature>
<feature type="compositionally biased region" description="Basic and acidic residues" evidence="2">
    <location>
        <begin position="746"/>
        <end position="756"/>
    </location>
</feature>
<feature type="compositionally biased region" description="Polar residues" evidence="2">
    <location>
        <begin position="757"/>
        <end position="782"/>
    </location>
</feature>
<protein>
    <recommendedName>
        <fullName>pH-response regulator protein palF/RIM8</fullName>
    </recommendedName>
</protein>
<keyword id="KW-1185">Reference proteome</keyword>
<name>PALF_DEBHA</name>
<gene>
    <name type="primary">RIM8</name>
    <name type="ordered locus">DEHA2A13112g</name>
</gene>
<organism>
    <name type="scientific">Debaryomyces hansenii (strain ATCC 36239 / CBS 767 / BCRC 21394 / JCM 1990 / NBRC 0083 / IGC 2968)</name>
    <name type="common">Yeast</name>
    <name type="synonym">Torulaspora hansenii</name>
    <dbReference type="NCBI Taxonomy" id="284592"/>
    <lineage>
        <taxon>Eukaryota</taxon>
        <taxon>Fungi</taxon>
        <taxon>Dikarya</taxon>
        <taxon>Ascomycota</taxon>
        <taxon>Saccharomycotina</taxon>
        <taxon>Pichiomycetes</taxon>
        <taxon>Debaryomycetaceae</taxon>
        <taxon>Debaryomyces</taxon>
    </lineage>
</organism>
<evidence type="ECO:0000250" key="1"/>
<evidence type="ECO:0000256" key="2">
    <source>
        <dbReference type="SAM" id="MobiDB-lite"/>
    </source>
</evidence>
<evidence type="ECO:0000305" key="3"/>
<comment type="function">
    <text evidence="1">Required for the proteolytic cleavage of the transcription factor RIM101 in response to alkaline ambient pH.</text>
</comment>
<comment type="similarity">
    <text evidence="3">Belongs to the arrestin family. PalF/RIM8 subfamily.</text>
</comment>
<dbReference type="EMBL" id="CR382133">
    <property type="protein sequence ID" value="CAG84876.2"/>
    <property type="molecule type" value="Genomic_DNA"/>
</dbReference>
<dbReference type="RefSeq" id="XP_456899.2">
    <property type="nucleotide sequence ID" value="XM_456899.1"/>
</dbReference>
<dbReference type="FunCoup" id="Q6BY20">
    <property type="interactions" value="31"/>
</dbReference>
<dbReference type="STRING" id="284592.Q6BY20"/>
<dbReference type="GeneID" id="2899420"/>
<dbReference type="KEGG" id="dha:DEHA2A13112g"/>
<dbReference type="VEuPathDB" id="FungiDB:DEHA2A13112g"/>
<dbReference type="eggNOG" id="ENOG502QTQN">
    <property type="taxonomic scope" value="Eukaryota"/>
</dbReference>
<dbReference type="HOGENOM" id="CLU_006001_1_0_1"/>
<dbReference type="InParanoid" id="Q6BY20"/>
<dbReference type="OMA" id="CLHGYAK"/>
<dbReference type="OrthoDB" id="7785529at2759"/>
<dbReference type="Proteomes" id="UP000000599">
    <property type="component" value="Chromosome A"/>
</dbReference>
<dbReference type="GO" id="GO:0005829">
    <property type="term" value="C:cytosol"/>
    <property type="evidence" value="ECO:0007669"/>
    <property type="project" value="TreeGrafter"/>
</dbReference>
<dbReference type="GO" id="GO:0005886">
    <property type="term" value="C:plasma membrane"/>
    <property type="evidence" value="ECO:0007669"/>
    <property type="project" value="TreeGrafter"/>
</dbReference>
<dbReference type="GO" id="GO:0030674">
    <property type="term" value="F:protein-macromolecule adaptor activity"/>
    <property type="evidence" value="ECO:0007669"/>
    <property type="project" value="TreeGrafter"/>
</dbReference>
<dbReference type="GO" id="GO:0031625">
    <property type="term" value="F:ubiquitin protein ligase binding"/>
    <property type="evidence" value="ECO:0007669"/>
    <property type="project" value="TreeGrafter"/>
</dbReference>
<dbReference type="GO" id="GO:0070086">
    <property type="term" value="P:ubiquitin-dependent endocytosis"/>
    <property type="evidence" value="ECO:0007669"/>
    <property type="project" value="TreeGrafter"/>
</dbReference>
<dbReference type="Gene3D" id="2.60.40.640">
    <property type="match status" value="2"/>
</dbReference>
<dbReference type="InterPro" id="IPR014752">
    <property type="entry name" value="Arrestin-like_C"/>
</dbReference>
<dbReference type="InterPro" id="IPR011021">
    <property type="entry name" value="Arrestin-like_N"/>
</dbReference>
<dbReference type="InterPro" id="IPR011022">
    <property type="entry name" value="Arrestin_C-like"/>
</dbReference>
<dbReference type="InterPro" id="IPR050357">
    <property type="entry name" value="Arrestin_domain-protein"/>
</dbReference>
<dbReference type="PANTHER" id="PTHR11188">
    <property type="entry name" value="ARRESTIN DOMAIN CONTAINING PROTEIN"/>
    <property type="match status" value="1"/>
</dbReference>
<dbReference type="PANTHER" id="PTHR11188:SF161">
    <property type="entry name" value="PH-RESPONSE REGULATOR PROTEIN PALF_RIM8"/>
    <property type="match status" value="1"/>
</dbReference>
<dbReference type="Pfam" id="PF02752">
    <property type="entry name" value="Arrestin_C"/>
    <property type="match status" value="1"/>
</dbReference>
<dbReference type="Pfam" id="PF00339">
    <property type="entry name" value="Arrestin_N"/>
    <property type="match status" value="1"/>
</dbReference>
<dbReference type="SMART" id="SM01017">
    <property type="entry name" value="Arrestin_C"/>
    <property type="match status" value="1"/>
</dbReference>
<sequence length="782" mass="86686">MRRAVSKIIPNGPPRFLQSGSLLSGDTNFKYRIDFNSVDEFYISLADPHRSWLPGDEISGQIIFISKKDLANIVITLSLIGSVKINASSHSKLRPVKELLFHHTIKIYGDENSGNNNENGEEFSNGLFKGEHRFPFIVKLPNKRVFTSIDFGKGSIKYSLKAAVGNASSFANDSPAASPLSDSNNNNNNTTKNNFISKTKNLNFHNSVYTSEKIITLINPIDVSKLPRSKPKRLIIKDPRLSKKLSRTQSSTSTLNTVNTFNTLSSNNSDTTTNGEFHSNGNTPGNSASQSNSNSPLNGLDNARPQVIKVALEIPERGFLRGELIPTKLNINHSRKIQDLNGIIVTLVRVCRLSNGHENMVESFRKDLQQSVLPLYVDPNTFQSEINTNLRVPADAFPTISGCPLVSFQYFIEVLINLSGKSLILDSSNHHKPSISTDEANHSLLENPSNDLKYKFNFNSNASMNQNERSGFINTDKYKRMKKFLLLTTEVIIGTNRSNERSAYTSNERSNELLHDNLNSISPTSRKSSSVSGSNDSPLLFNQTGSTPPSQQGHQQPMSLNPLSEAIPANNFSTPPYFENQQDSPLNIADTPIPGYEEVSNNYHANSSLAPVQMPTHQHLSEKEQIRAHEASLLPSAPPLDDAEETETISPIDKNNEILENIEESGEEVNQLNNESNDSASSRHSQSFGFFTYQNSTSTTTPTNHESLEEEEEEEEDNLYHSNNLSNSHAEIDSESTDWVPNYETANHDILLENDHVSTGTNMHPGRNANSSARGPQQDNSS</sequence>
<proteinExistence type="inferred from homology"/>
<reference key="1">
    <citation type="journal article" date="2004" name="Nature">
        <title>Genome evolution in yeasts.</title>
        <authorList>
            <person name="Dujon B."/>
            <person name="Sherman D."/>
            <person name="Fischer G."/>
            <person name="Durrens P."/>
            <person name="Casaregola S."/>
            <person name="Lafontaine I."/>
            <person name="de Montigny J."/>
            <person name="Marck C."/>
            <person name="Neuveglise C."/>
            <person name="Talla E."/>
            <person name="Goffard N."/>
            <person name="Frangeul L."/>
            <person name="Aigle M."/>
            <person name="Anthouard V."/>
            <person name="Babour A."/>
            <person name="Barbe V."/>
            <person name="Barnay S."/>
            <person name="Blanchin S."/>
            <person name="Beckerich J.-M."/>
            <person name="Beyne E."/>
            <person name="Bleykasten C."/>
            <person name="Boisrame A."/>
            <person name="Boyer J."/>
            <person name="Cattolico L."/>
            <person name="Confanioleri F."/>
            <person name="de Daruvar A."/>
            <person name="Despons L."/>
            <person name="Fabre E."/>
            <person name="Fairhead C."/>
            <person name="Ferry-Dumazet H."/>
            <person name="Groppi A."/>
            <person name="Hantraye F."/>
            <person name="Hennequin C."/>
            <person name="Jauniaux N."/>
            <person name="Joyet P."/>
            <person name="Kachouri R."/>
            <person name="Kerrest A."/>
            <person name="Koszul R."/>
            <person name="Lemaire M."/>
            <person name="Lesur I."/>
            <person name="Ma L."/>
            <person name="Muller H."/>
            <person name="Nicaud J.-M."/>
            <person name="Nikolski M."/>
            <person name="Oztas S."/>
            <person name="Ozier-Kalogeropoulos O."/>
            <person name="Pellenz S."/>
            <person name="Potier S."/>
            <person name="Richard G.-F."/>
            <person name="Straub M.-L."/>
            <person name="Suleau A."/>
            <person name="Swennen D."/>
            <person name="Tekaia F."/>
            <person name="Wesolowski-Louvel M."/>
            <person name="Westhof E."/>
            <person name="Wirth B."/>
            <person name="Zeniou-Meyer M."/>
            <person name="Zivanovic Y."/>
            <person name="Bolotin-Fukuhara M."/>
            <person name="Thierry A."/>
            <person name="Bouchier C."/>
            <person name="Caudron B."/>
            <person name="Scarpelli C."/>
            <person name="Gaillardin C."/>
            <person name="Weissenbach J."/>
            <person name="Wincker P."/>
            <person name="Souciet J.-L."/>
        </authorList>
    </citation>
    <scope>NUCLEOTIDE SEQUENCE [LARGE SCALE GENOMIC DNA]</scope>
    <source>
        <strain>ATCC 36239 / CBS 767 / BCRC 21394 / JCM 1990 / NBRC 0083 / IGC 2968</strain>
    </source>
</reference>
<accession>Q6BY20</accession>